<feature type="chain" id="PRO_1000086360" description="DNA-directed RNA polymerase subunit beta">
    <location>
        <begin position="1"/>
        <end position="1271"/>
    </location>
</feature>
<sequence>MSYKTVKYGKKAERRDYSKMLHQVELPNLIEIQTKSFEEFVETGIDELLKDISPIEGHNGDLKLYFEESSLSEPKYSTIETKIRDLNYSRQLSARVKLENAITGEVRESTVLMTDLPMMTPSGTFIINGAERVVVSQIVRSSGVYYTSELDKKINQIKYSAQVIPTRGAWIEFEQGSKEILYAKLDRSKKVPLTTFIRALGFTTKKDIEETFGRSSLITNTFEKDETKSPNEAVIDLYSKLRQGEKVPADAAREFIRMRLFDARRYDLAKVGRYKFIKKLDVLARAEGTYLANDIILDGEVLVAKDTHLTKEVIQILAQNRDAFRKQLITKENNLQNETADEILATTLPEGGNTLYAKENVVNLKTGEVLVKKNEAITEEVLTNLRKNRHSIDEKVIKYFLTEDVYKKESLRQGVISEILDVYVYDDAGDKSNVIRIIGSDQREDRIFVAVSDIVASISYFLNLYDGLGNVDDIDHLGNRRLRLIGELLKNQFRIGLARAEKNIKDKMSTTNFNDATPANVINMTPLVGAIKTFFGSSQLSQFMDQINPLAELTQKRRVSALGTGGIARDRAGVEVRDVHNSHYGRLCPIETPEGPSIGLISSLATYAKVDEYGFIKTPFLKVVQNGNETSVTKEVIYLTADEESDHVIASAATPMDEHGLFIESRVIARRNGETGIYDANEITAMDVSPKQVVSVATSSIPFLEHDDASRALMGANMQRQAVPLLQPTSPIVGTGVEYRAAKDSGAVVIAKNSGYVTYVDGKKIIITPEPTDTIKSGSKTLYKVGGEFDYGIAKKLYETKSVQNDQYDLVQFFRSNQDTLILQKPIVMQGEYVDAGDVIADGPSTENGELALGRNVTVAFMTWEGYNYEDAVIMSEDLVKHDVYTSIHIDEYEIETRDLKQANGKEEITREIPNVGQEAIKFLDERGIIVPGSEVKEGDILVGKITPKGVFEPTPSEKLIHAVIGDKAKEYRDSSLRVPHGGGGVVQSVQYFSKKNGDQLPTGVNEQIRVYIAKKRKITEGDKMAGRHGNKGVISKILPREDMPYLADGTYVDIMLNPLGVPSRMNIGQILEIHLGISAQKLGIKVASPVFDGVTNDELGAIMEEAGIAPDGKTTLYDGRTGEPYNNRISVGVMYMIKLSHMVDDKLHARNVGPYTLVTQQPMGGKAQNGGQRFGEMEVWALYAYGAAHTLQEMLTIKSDDMIGRNKVYYAITHGQEIPKASIPESFRVLTRELQALGLYVELIDANKGENEAIKSLVDNSSKGFNKGRF</sequence>
<proteinExistence type="inferred from homology"/>
<reference key="1">
    <citation type="journal article" date="2011" name="J. Bacteriol.">
        <title>Complete genome and proteome of Acholeplasma laidlawii.</title>
        <authorList>
            <person name="Lazarev V.N."/>
            <person name="Levitskii S.A."/>
            <person name="Basovskii Y.I."/>
            <person name="Chukin M.M."/>
            <person name="Akopian T.A."/>
            <person name="Vereshchagin V.V."/>
            <person name="Kostrjukova E.S."/>
            <person name="Kovaleva G.Y."/>
            <person name="Kazanov M.D."/>
            <person name="Malko D.B."/>
            <person name="Vitreschak A.G."/>
            <person name="Sernova N.V."/>
            <person name="Gelfand M.S."/>
            <person name="Demina I.A."/>
            <person name="Serebryakova M.V."/>
            <person name="Galyamina M.A."/>
            <person name="Vtyurin N.N."/>
            <person name="Rogov S.I."/>
            <person name="Alexeev D.G."/>
            <person name="Ladygina V.G."/>
            <person name="Govorun V.M."/>
        </authorList>
    </citation>
    <scope>NUCLEOTIDE SEQUENCE [LARGE SCALE GENOMIC DNA]</scope>
    <source>
        <strain>PG-8A</strain>
    </source>
</reference>
<accession>A9NEL7</accession>
<organism>
    <name type="scientific">Acholeplasma laidlawii (strain PG-8A)</name>
    <dbReference type="NCBI Taxonomy" id="441768"/>
    <lineage>
        <taxon>Bacteria</taxon>
        <taxon>Bacillati</taxon>
        <taxon>Mycoplasmatota</taxon>
        <taxon>Mollicutes</taxon>
        <taxon>Acholeplasmatales</taxon>
        <taxon>Acholeplasmataceae</taxon>
        <taxon>Acholeplasma</taxon>
    </lineage>
</organism>
<comment type="function">
    <text evidence="1">DNA-dependent RNA polymerase catalyzes the transcription of DNA into RNA using the four ribonucleoside triphosphates as substrates.</text>
</comment>
<comment type="catalytic activity">
    <reaction evidence="1">
        <text>RNA(n) + a ribonucleoside 5'-triphosphate = RNA(n+1) + diphosphate</text>
        <dbReference type="Rhea" id="RHEA:21248"/>
        <dbReference type="Rhea" id="RHEA-COMP:14527"/>
        <dbReference type="Rhea" id="RHEA-COMP:17342"/>
        <dbReference type="ChEBI" id="CHEBI:33019"/>
        <dbReference type="ChEBI" id="CHEBI:61557"/>
        <dbReference type="ChEBI" id="CHEBI:140395"/>
        <dbReference type="EC" id="2.7.7.6"/>
    </reaction>
</comment>
<comment type="subunit">
    <text evidence="1">The RNAP catalytic core consists of 2 alpha, 1 beta, 1 beta' and 1 omega subunit. When a sigma factor is associated with the core the holoenzyme is formed, which can initiate transcription.</text>
</comment>
<comment type="similarity">
    <text evidence="1">Belongs to the RNA polymerase beta chain family.</text>
</comment>
<protein>
    <recommendedName>
        <fullName evidence="1">DNA-directed RNA polymerase subunit beta</fullName>
        <shortName evidence="1">RNAP subunit beta</shortName>
        <ecNumber evidence="1">2.7.7.6</ecNumber>
    </recommendedName>
    <alternativeName>
        <fullName evidence="1">RNA polymerase subunit beta</fullName>
    </alternativeName>
    <alternativeName>
        <fullName evidence="1">Transcriptase subunit beta</fullName>
    </alternativeName>
</protein>
<gene>
    <name evidence="1" type="primary">rpoB</name>
    <name type="ordered locus">ACL_0171</name>
</gene>
<keyword id="KW-0240">DNA-directed RNA polymerase</keyword>
<keyword id="KW-0548">Nucleotidyltransferase</keyword>
<keyword id="KW-1185">Reference proteome</keyword>
<keyword id="KW-0804">Transcription</keyword>
<keyword id="KW-0808">Transferase</keyword>
<dbReference type="EC" id="2.7.7.6" evidence="1"/>
<dbReference type="EMBL" id="CP000896">
    <property type="protein sequence ID" value="ABX80797.1"/>
    <property type="molecule type" value="Genomic_DNA"/>
</dbReference>
<dbReference type="RefSeq" id="WP_012242128.1">
    <property type="nucleotide sequence ID" value="NC_010163.1"/>
</dbReference>
<dbReference type="SMR" id="A9NEL7"/>
<dbReference type="STRING" id="441768.ACL_0171"/>
<dbReference type="GeneID" id="41338364"/>
<dbReference type="KEGG" id="acl:ACL_0171"/>
<dbReference type="eggNOG" id="COG0085">
    <property type="taxonomic scope" value="Bacteria"/>
</dbReference>
<dbReference type="HOGENOM" id="CLU_000524_4_1_14"/>
<dbReference type="OrthoDB" id="9803954at2"/>
<dbReference type="Proteomes" id="UP000008558">
    <property type="component" value="Chromosome"/>
</dbReference>
<dbReference type="GO" id="GO:0000428">
    <property type="term" value="C:DNA-directed RNA polymerase complex"/>
    <property type="evidence" value="ECO:0007669"/>
    <property type="project" value="UniProtKB-KW"/>
</dbReference>
<dbReference type="GO" id="GO:0003677">
    <property type="term" value="F:DNA binding"/>
    <property type="evidence" value="ECO:0007669"/>
    <property type="project" value="UniProtKB-UniRule"/>
</dbReference>
<dbReference type="GO" id="GO:0003899">
    <property type="term" value="F:DNA-directed RNA polymerase activity"/>
    <property type="evidence" value="ECO:0007669"/>
    <property type="project" value="UniProtKB-UniRule"/>
</dbReference>
<dbReference type="GO" id="GO:0032549">
    <property type="term" value="F:ribonucleoside binding"/>
    <property type="evidence" value="ECO:0007669"/>
    <property type="project" value="InterPro"/>
</dbReference>
<dbReference type="GO" id="GO:0006351">
    <property type="term" value="P:DNA-templated transcription"/>
    <property type="evidence" value="ECO:0007669"/>
    <property type="project" value="UniProtKB-UniRule"/>
</dbReference>
<dbReference type="CDD" id="cd00653">
    <property type="entry name" value="RNA_pol_B_RPB2"/>
    <property type="match status" value="1"/>
</dbReference>
<dbReference type="Gene3D" id="2.40.50.100">
    <property type="match status" value="1"/>
</dbReference>
<dbReference type="Gene3D" id="3.90.1100.10">
    <property type="match status" value="1"/>
</dbReference>
<dbReference type="Gene3D" id="2.30.150.10">
    <property type="entry name" value="DNA-directed RNA polymerase, beta subunit, external 1 domain"/>
    <property type="match status" value="1"/>
</dbReference>
<dbReference type="Gene3D" id="2.40.270.10">
    <property type="entry name" value="DNA-directed RNA polymerase, subunit 2, domain 6"/>
    <property type="match status" value="3"/>
</dbReference>
<dbReference type="Gene3D" id="3.90.1800.10">
    <property type="entry name" value="RNA polymerase alpha subunit dimerisation domain"/>
    <property type="match status" value="1"/>
</dbReference>
<dbReference type="Gene3D" id="3.90.1110.10">
    <property type="entry name" value="RNA polymerase Rpb2, domain 2"/>
    <property type="match status" value="1"/>
</dbReference>
<dbReference type="HAMAP" id="MF_01321">
    <property type="entry name" value="RNApol_bact_RpoB"/>
    <property type="match status" value="1"/>
</dbReference>
<dbReference type="InterPro" id="IPR042107">
    <property type="entry name" value="DNA-dir_RNA_pol_bsu_ext_1_sf"/>
</dbReference>
<dbReference type="InterPro" id="IPR019462">
    <property type="entry name" value="DNA-dir_RNA_pol_bsu_external_1"/>
</dbReference>
<dbReference type="InterPro" id="IPR015712">
    <property type="entry name" value="DNA-dir_RNA_pol_su2"/>
</dbReference>
<dbReference type="InterPro" id="IPR007120">
    <property type="entry name" value="DNA-dir_RNAP_su2_dom"/>
</dbReference>
<dbReference type="InterPro" id="IPR037033">
    <property type="entry name" value="DNA-dir_RNAP_su2_hyb_sf"/>
</dbReference>
<dbReference type="InterPro" id="IPR010243">
    <property type="entry name" value="RNA_pol_bsu_bac"/>
</dbReference>
<dbReference type="InterPro" id="IPR007121">
    <property type="entry name" value="RNA_pol_bsu_CS"/>
</dbReference>
<dbReference type="InterPro" id="IPR007644">
    <property type="entry name" value="RNA_pol_bsu_protrusion"/>
</dbReference>
<dbReference type="InterPro" id="IPR007642">
    <property type="entry name" value="RNA_pol_Rpb2_2"/>
</dbReference>
<dbReference type="InterPro" id="IPR037034">
    <property type="entry name" value="RNA_pol_Rpb2_2_sf"/>
</dbReference>
<dbReference type="InterPro" id="IPR007645">
    <property type="entry name" value="RNA_pol_Rpb2_3"/>
</dbReference>
<dbReference type="InterPro" id="IPR007641">
    <property type="entry name" value="RNA_pol_Rpb2_7"/>
</dbReference>
<dbReference type="NCBIfam" id="NF001616">
    <property type="entry name" value="PRK00405.1"/>
    <property type="match status" value="1"/>
</dbReference>
<dbReference type="NCBIfam" id="TIGR02013">
    <property type="entry name" value="rpoB"/>
    <property type="match status" value="1"/>
</dbReference>
<dbReference type="PANTHER" id="PTHR20856">
    <property type="entry name" value="DNA-DIRECTED RNA POLYMERASE I SUBUNIT 2"/>
    <property type="match status" value="1"/>
</dbReference>
<dbReference type="Pfam" id="PF04563">
    <property type="entry name" value="RNA_pol_Rpb2_1"/>
    <property type="match status" value="1"/>
</dbReference>
<dbReference type="Pfam" id="PF04561">
    <property type="entry name" value="RNA_pol_Rpb2_2"/>
    <property type="match status" value="2"/>
</dbReference>
<dbReference type="Pfam" id="PF04565">
    <property type="entry name" value="RNA_pol_Rpb2_3"/>
    <property type="match status" value="1"/>
</dbReference>
<dbReference type="Pfam" id="PF10385">
    <property type="entry name" value="RNA_pol_Rpb2_45"/>
    <property type="match status" value="1"/>
</dbReference>
<dbReference type="Pfam" id="PF00562">
    <property type="entry name" value="RNA_pol_Rpb2_6"/>
    <property type="match status" value="1"/>
</dbReference>
<dbReference type="Pfam" id="PF04560">
    <property type="entry name" value="RNA_pol_Rpb2_7"/>
    <property type="match status" value="1"/>
</dbReference>
<dbReference type="SUPFAM" id="SSF64484">
    <property type="entry name" value="beta and beta-prime subunits of DNA dependent RNA-polymerase"/>
    <property type="match status" value="1"/>
</dbReference>
<dbReference type="PROSITE" id="PS01166">
    <property type="entry name" value="RNA_POL_BETA"/>
    <property type="match status" value="1"/>
</dbReference>
<evidence type="ECO:0000255" key="1">
    <source>
        <dbReference type="HAMAP-Rule" id="MF_01321"/>
    </source>
</evidence>
<name>RPOB_ACHLI</name>